<evidence type="ECO:0000255" key="1">
    <source>
        <dbReference type="HAMAP-Rule" id="MF_01509"/>
    </source>
</evidence>
<comment type="function">
    <text evidence="1">Part of the RFC clamp loader complex which loads the PCNA sliding clamp onto DNA.</text>
</comment>
<comment type="subunit">
    <text evidence="1">Heteromultimer composed of small subunits (RfcS) and large subunits (RfcL).</text>
</comment>
<comment type="similarity">
    <text evidence="1">Belongs to the activator 1 small subunits family. RfcS subfamily.</text>
</comment>
<proteinExistence type="inferred from homology"/>
<protein>
    <recommendedName>
        <fullName evidence="1">Replication factor C small subunit</fullName>
        <shortName evidence="1">RFC small subunit</shortName>
    </recommendedName>
    <alternativeName>
        <fullName evidence="1">Clamp loader small subunit</fullName>
    </alternativeName>
</protein>
<feature type="chain" id="PRO_0000245639" description="Replication factor C small subunit">
    <location>
        <begin position="1"/>
        <end position="334"/>
    </location>
</feature>
<feature type="binding site" evidence="1">
    <location>
        <begin position="49"/>
        <end position="56"/>
    </location>
    <ligand>
        <name>ATP</name>
        <dbReference type="ChEBI" id="CHEBI:30616"/>
    </ligand>
</feature>
<keyword id="KW-0067">ATP-binding</keyword>
<keyword id="KW-0235">DNA replication</keyword>
<keyword id="KW-0547">Nucleotide-binding</keyword>
<gene>
    <name evidence="1" type="primary">rfcS</name>
    <name type="ordered locus">Mbar_A1582</name>
</gene>
<accession>Q46C63</accession>
<reference key="1">
    <citation type="journal article" date="2006" name="J. Bacteriol.">
        <title>The Methanosarcina barkeri genome: comparative analysis with Methanosarcina acetivorans and Methanosarcina mazei reveals extensive rearrangement within methanosarcinal genomes.</title>
        <authorList>
            <person name="Maeder D.L."/>
            <person name="Anderson I."/>
            <person name="Brettin T.S."/>
            <person name="Bruce D.C."/>
            <person name="Gilna P."/>
            <person name="Han C.S."/>
            <person name="Lapidus A."/>
            <person name="Metcalf W.W."/>
            <person name="Saunders E."/>
            <person name="Tapia R."/>
            <person name="Sowers K.R."/>
        </authorList>
    </citation>
    <scope>NUCLEOTIDE SEQUENCE [LARGE SCALE GENOMIC DNA]</scope>
    <source>
        <strain>Fusaro / DSM 804</strain>
    </source>
</reference>
<organism>
    <name type="scientific">Methanosarcina barkeri (strain Fusaro / DSM 804)</name>
    <dbReference type="NCBI Taxonomy" id="269797"/>
    <lineage>
        <taxon>Archaea</taxon>
        <taxon>Methanobacteriati</taxon>
        <taxon>Methanobacteriota</taxon>
        <taxon>Stenosarchaea group</taxon>
        <taxon>Methanomicrobia</taxon>
        <taxon>Methanosarcinales</taxon>
        <taxon>Methanosarcinaceae</taxon>
        <taxon>Methanosarcina</taxon>
    </lineage>
</organism>
<name>RFCS_METBF</name>
<dbReference type="EMBL" id="CP000099">
    <property type="protein sequence ID" value="AAZ70529.1"/>
    <property type="molecule type" value="Genomic_DNA"/>
</dbReference>
<dbReference type="SMR" id="Q46C63"/>
<dbReference type="STRING" id="269797.Mbar_A1582"/>
<dbReference type="PaxDb" id="269797-Mbar_A1582"/>
<dbReference type="KEGG" id="mba:Mbar_A1582"/>
<dbReference type="eggNOG" id="arCOG00469">
    <property type="taxonomic scope" value="Archaea"/>
</dbReference>
<dbReference type="HOGENOM" id="CLU_042324_1_0_2"/>
<dbReference type="OrthoDB" id="7928at2157"/>
<dbReference type="GO" id="GO:0005663">
    <property type="term" value="C:DNA replication factor C complex"/>
    <property type="evidence" value="ECO:0007669"/>
    <property type="project" value="InterPro"/>
</dbReference>
<dbReference type="GO" id="GO:0005524">
    <property type="term" value="F:ATP binding"/>
    <property type="evidence" value="ECO:0007669"/>
    <property type="project" value="UniProtKB-UniRule"/>
</dbReference>
<dbReference type="GO" id="GO:0016887">
    <property type="term" value="F:ATP hydrolysis activity"/>
    <property type="evidence" value="ECO:0007669"/>
    <property type="project" value="InterPro"/>
</dbReference>
<dbReference type="GO" id="GO:0003677">
    <property type="term" value="F:DNA binding"/>
    <property type="evidence" value="ECO:0007669"/>
    <property type="project" value="InterPro"/>
</dbReference>
<dbReference type="GO" id="GO:0003689">
    <property type="term" value="F:DNA clamp loader activity"/>
    <property type="evidence" value="ECO:0007669"/>
    <property type="project" value="UniProtKB-UniRule"/>
</dbReference>
<dbReference type="GO" id="GO:0006281">
    <property type="term" value="P:DNA repair"/>
    <property type="evidence" value="ECO:0007669"/>
    <property type="project" value="TreeGrafter"/>
</dbReference>
<dbReference type="GO" id="GO:0006261">
    <property type="term" value="P:DNA-templated DNA replication"/>
    <property type="evidence" value="ECO:0007669"/>
    <property type="project" value="TreeGrafter"/>
</dbReference>
<dbReference type="CDD" id="cd00009">
    <property type="entry name" value="AAA"/>
    <property type="match status" value="1"/>
</dbReference>
<dbReference type="CDD" id="cd18140">
    <property type="entry name" value="HLD_clamp_RFC"/>
    <property type="match status" value="1"/>
</dbReference>
<dbReference type="FunFam" id="1.20.272.10:FF:000029">
    <property type="entry name" value="Replication factor C small subunit"/>
    <property type="match status" value="1"/>
</dbReference>
<dbReference type="FunFam" id="3.40.50.300:FF:000129">
    <property type="entry name" value="Replication factor C subunit 5"/>
    <property type="match status" value="1"/>
</dbReference>
<dbReference type="Gene3D" id="1.10.8.60">
    <property type="match status" value="1"/>
</dbReference>
<dbReference type="Gene3D" id="1.20.272.10">
    <property type="match status" value="1"/>
</dbReference>
<dbReference type="Gene3D" id="3.40.50.300">
    <property type="entry name" value="P-loop containing nucleotide triphosphate hydrolases"/>
    <property type="match status" value="1"/>
</dbReference>
<dbReference type="HAMAP" id="MF_01509">
    <property type="entry name" value="RfcS"/>
    <property type="match status" value="1"/>
</dbReference>
<dbReference type="InterPro" id="IPR003593">
    <property type="entry name" value="AAA+_ATPase"/>
</dbReference>
<dbReference type="InterPro" id="IPR003959">
    <property type="entry name" value="ATPase_AAA_core"/>
</dbReference>
<dbReference type="InterPro" id="IPR008921">
    <property type="entry name" value="DNA_pol3_clamp-load_cplx_C"/>
</dbReference>
<dbReference type="InterPro" id="IPR050238">
    <property type="entry name" value="DNA_Rep/Repair_Clamp_Loader"/>
</dbReference>
<dbReference type="InterPro" id="IPR027417">
    <property type="entry name" value="P-loop_NTPase"/>
</dbReference>
<dbReference type="InterPro" id="IPR023748">
    <property type="entry name" value="Rep_factor-C_ssu_arc"/>
</dbReference>
<dbReference type="InterPro" id="IPR013748">
    <property type="entry name" value="Rep_factorC_C"/>
</dbReference>
<dbReference type="InterPro" id="IPR047854">
    <property type="entry name" value="RFC_lid"/>
</dbReference>
<dbReference type="NCBIfam" id="NF001679">
    <property type="entry name" value="PRK00440.1"/>
    <property type="match status" value="1"/>
</dbReference>
<dbReference type="PANTHER" id="PTHR11669">
    <property type="entry name" value="REPLICATION FACTOR C / DNA POLYMERASE III GAMMA-TAU SUBUNIT"/>
    <property type="match status" value="1"/>
</dbReference>
<dbReference type="PANTHER" id="PTHR11669:SF20">
    <property type="entry name" value="REPLICATION FACTOR C SUBUNIT 4"/>
    <property type="match status" value="1"/>
</dbReference>
<dbReference type="Pfam" id="PF00004">
    <property type="entry name" value="AAA"/>
    <property type="match status" value="1"/>
</dbReference>
<dbReference type="Pfam" id="PF08542">
    <property type="entry name" value="Rep_fac_C"/>
    <property type="match status" value="1"/>
</dbReference>
<dbReference type="SMART" id="SM00382">
    <property type="entry name" value="AAA"/>
    <property type="match status" value="1"/>
</dbReference>
<dbReference type="SUPFAM" id="SSF52540">
    <property type="entry name" value="P-loop containing nucleoside triphosphate hydrolases"/>
    <property type="match status" value="1"/>
</dbReference>
<dbReference type="SUPFAM" id="SSF48019">
    <property type="entry name" value="post-AAA+ oligomerization domain-like"/>
    <property type="match status" value="1"/>
</dbReference>
<sequence length="334" mass="37811">MEDSTIKEEIWIEKYRPVRLDQVAGQEETIERLKSYVATKNLPHLLFSGPPGVGKTASAVSIAREIFGEDLWRENFTELNASDERGIDVVRTKIKNFAKTAPMGGAEFKIIFLDEADALTSDAQSALRRTMERFSNNCRFILSCNYSSRIIEPIQSRCAVFRFRRLSDEAIRKRLEYIAKDQVLSITEDGYEALVYVSQGDMRKAVNSLQAAAFVEPNKSISRGTIYRTTATANPEDIRNLIETALRGNFRVARKELNRLLYEEGLSGEDIVGQIYRAISEMDNRMILDLGLSEKRIVELVDIIGEIDFRLTEGATEKIQLEALLAHFALSNPD</sequence>